<dbReference type="EMBL" id="AE017321">
    <property type="protein sequence ID" value="AAW70891.1"/>
    <property type="molecule type" value="Genomic_DNA"/>
</dbReference>
<dbReference type="RefSeq" id="WP_011256501.1">
    <property type="nucleotide sequence ID" value="NC_006833.1"/>
</dbReference>
<dbReference type="SMR" id="Q5GSY3"/>
<dbReference type="STRING" id="292805.Wbm0302"/>
<dbReference type="KEGG" id="wbm:Wbm0302"/>
<dbReference type="eggNOG" id="COG0227">
    <property type="taxonomic scope" value="Bacteria"/>
</dbReference>
<dbReference type="HOGENOM" id="CLU_064548_4_2_5"/>
<dbReference type="Proteomes" id="UP000000534">
    <property type="component" value="Chromosome"/>
</dbReference>
<dbReference type="GO" id="GO:0022625">
    <property type="term" value="C:cytosolic large ribosomal subunit"/>
    <property type="evidence" value="ECO:0007669"/>
    <property type="project" value="TreeGrafter"/>
</dbReference>
<dbReference type="GO" id="GO:0003735">
    <property type="term" value="F:structural constituent of ribosome"/>
    <property type="evidence" value="ECO:0007669"/>
    <property type="project" value="InterPro"/>
</dbReference>
<dbReference type="GO" id="GO:0006412">
    <property type="term" value="P:translation"/>
    <property type="evidence" value="ECO:0007669"/>
    <property type="project" value="UniProtKB-UniRule"/>
</dbReference>
<dbReference type="Gene3D" id="2.30.170.40">
    <property type="entry name" value="Ribosomal protein L28/L24"/>
    <property type="match status" value="1"/>
</dbReference>
<dbReference type="HAMAP" id="MF_00373">
    <property type="entry name" value="Ribosomal_bL28"/>
    <property type="match status" value="1"/>
</dbReference>
<dbReference type="InterPro" id="IPR026569">
    <property type="entry name" value="Ribosomal_bL28"/>
</dbReference>
<dbReference type="InterPro" id="IPR034704">
    <property type="entry name" value="Ribosomal_bL28/bL31-like_sf"/>
</dbReference>
<dbReference type="InterPro" id="IPR001383">
    <property type="entry name" value="Ribosomal_bL28_bact-type"/>
</dbReference>
<dbReference type="InterPro" id="IPR037147">
    <property type="entry name" value="Ribosomal_bL28_sf"/>
</dbReference>
<dbReference type="NCBIfam" id="TIGR00009">
    <property type="entry name" value="L28"/>
    <property type="match status" value="1"/>
</dbReference>
<dbReference type="PANTHER" id="PTHR13528">
    <property type="entry name" value="39S RIBOSOMAL PROTEIN L28, MITOCHONDRIAL"/>
    <property type="match status" value="1"/>
</dbReference>
<dbReference type="PANTHER" id="PTHR13528:SF2">
    <property type="entry name" value="LARGE RIBOSOMAL SUBUNIT PROTEIN BL28M"/>
    <property type="match status" value="1"/>
</dbReference>
<dbReference type="Pfam" id="PF00830">
    <property type="entry name" value="Ribosomal_L28"/>
    <property type="match status" value="1"/>
</dbReference>
<dbReference type="SUPFAM" id="SSF143800">
    <property type="entry name" value="L28p-like"/>
    <property type="match status" value="1"/>
</dbReference>
<keyword id="KW-1185">Reference proteome</keyword>
<keyword id="KW-0687">Ribonucleoprotein</keyword>
<keyword id="KW-0689">Ribosomal protein</keyword>
<reference key="1">
    <citation type="journal article" date="2005" name="PLoS Biol.">
        <title>The Wolbachia genome of Brugia malayi: endosymbiont evolution within a human pathogenic nematode.</title>
        <authorList>
            <person name="Foster J."/>
            <person name="Ganatra M."/>
            <person name="Kamal I."/>
            <person name="Ware J."/>
            <person name="Makarova K."/>
            <person name="Ivanova N."/>
            <person name="Bhattacharyya A."/>
            <person name="Kapatral V."/>
            <person name="Kumar S."/>
            <person name="Posfai J."/>
            <person name="Vincze T."/>
            <person name="Ingram J."/>
            <person name="Moran L."/>
            <person name="Lapidus A."/>
            <person name="Omelchenko M."/>
            <person name="Kyrpides N."/>
            <person name="Ghedin E."/>
            <person name="Wang S."/>
            <person name="Goltsman E."/>
            <person name="Joukov V."/>
            <person name="Ostrovskaya O."/>
            <person name="Tsukerman K."/>
            <person name="Mazur M."/>
            <person name="Comb D."/>
            <person name="Koonin E."/>
            <person name="Slatko B."/>
        </authorList>
    </citation>
    <scope>NUCLEOTIDE SEQUENCE [LARGE SCALE GENOMIC DNA]</scope>
    <source>
        <strain>TRS</strain>
    </source>
</reference>
<sequence length="104" mass="12038">MSRVCELTNRKKSFGNKVSHSNRKAKRIFLLNLHNVTLISNILNKKFKFRVAIRTLRTIDYKGNLDAFLLNTRTVKLSKKAQKIKRKLKKVLAKQEVELGISDA</sequence>
<organism>
    <name type="scientific">Wolbachia sp. subsp. Brugia malayi (strain TRS)</name>
    <dbReference type="NCBI Taxonomy" id="292805"/>
    <lineage>
        <taxon>Bacteria</taxon>
        <taxon>Pseudomonadati</taxon>
        <taxon>Pseudomonadota</taxon>
        <taxon>Alphaproteobacteria</taxon>
        <taxon>Rickettsiales</taxon>
        <taxon>Anaplasmataceae</taxon>
        <taxon>Wolbachieae</taxon>
        <taxon>Wolbachia</taxon>
    </lineage>
</organism>
<protein>
    <recommendedName>
        <fullName evidence="1">Large ribosomal subunit protein bL28</fullName>
    </recommendedName>
    <alternativeName>
        <fullName evidence="2">50S ribosomal protein L28</fullName>
    </alternativeName>
</protein>
<proteinExistence type="inferred from homology"/>
<evidence type="ECO:0000255" key="1">
    <source>
        <dbReference type="HAMAP-Rule" id="MF_00373"/>
    </source>
</evidence>
<evidence type="ECO:0000305" key="2"/>
<feature type="chain" id="PRO_0000178592" description="Large ribosomal subunit protein bL28">
    <location>
        <begin position="1"/>
        <end position="104"/>
    </location>
</feature>
<accession>Q5GSY3</accession>
<comment type="similarity">
    <text evidence="1">Belongs to the bacterial ribosomal protein bL28 family.</text>
</comment>
<gene>
    <name evidence="1" type="primary">rpmB</name>
    <name type="ordered locus">Wbm0302</name>
</gene>
<name>RL28_WOLTR</name>